<proteinExistence type="evidence at protein level"/>
<name>IF4E2_HUMAN</name>
<sequence>MNNKFDALKDDDSGDHDQNEENSTQKDGEKEKTERDKNQSSSKRKAVVPGPAEHPLQYNYTFWYSRRTPGRPTSSQSYEQNIKQIGTFASVEQFWRFYSHMVRPGDLTGHSDFHLFKEGIKPMWEDDANKNGGKWIIRLRKGLASRCWENLILAMLGEQFMVGEEICGAVVSVRFQEDIISIWNKTASDQATTARIRDTLRRVLNLPPNTIMEYKTHTDSIKMPGRLGPQRLLFQNLWKPRLNVP</sequence>
<gene>
    <name evidence="16 20" type="primary">EIF4E2</name>
    <name type="synonym">EIF4EL3</name>
</gene>
<organism>
    <name type="scientific">Homo sapiens</name>
    <name type="common">Human</name>
    <dbReference type="NCBI Taxonomy" id="9606"/>
    <lineage>
        <taxon>Eukaryota</taxon>
        <taxon>Metazoa</taxon>
        <taxon>Chordata</taxon>
        <taxon>Craniata</taxon>
        <taxon>Vertebrata</taxon>
        <taxon>Euteleostomi</taxon>
        <taxon>Mammalia</taxon>
        <taxon>Eutheria</taxon>
        <taxon>Euarchontoglires</taxon>
        <taxon>Primates</taxon>
        <taxon>Haplorrhini</taxon>
        <taxon>Catarrhini</taxon>
        <taxon>Hominidae</taxon>
        <taxon>Homo</taxon>
    </lineage>
</organism>
<feature type="chain" id="PRO_0000193664" description="Eukaryotic translation initiation factor 4E type 2">
    <location>
        <begin position="1"/>
        <end position="245"/>
    </location>
</feature>
<feature type="region of interest" description="Disordered" evidence="3">
    <location>
        <begin position="1"/>
        <end position="52"/>
    </location>
</feature>
<feature type="region of interest" description="EIF4EBP1/2/3 binding" evidence="7">
    <location>
        <begin position="54"/>
        <end position="57"/>
    </location>
</feature>
<feature type="region of interest" description="EIF4EBP1/2/3 binding" evidence="7">
    <location>
        <begin position="95"/>
        <end position="99"/>
    </location>
</feature>
<feature type="region of interest" description="EIF4EBP1/2/3 binding" evidence="7">
    <location>
        <begin position="150"/>
        <end position="157"/>
    </location>
</feature>
<feature type="compositionally biased region" description="Basic and acidic residues" evidence="3">
    <location>
        <begin position="1"/>
        <end position="38"/>
    </location>
</feature>
<feature type="binding site" evidence="1">
    <location>
        <begin position="78"/>
        <end position="79"/>
    </location>
    <ligand>
        <name>mRNA</name>
        <dbReference type="ChEBI" id="CHEBI:33699"/>
    </ligand>
    <ligandPart>
        <name>N(7)-methylguanosine 5'-triphosphate group</name>
        <dbReference type="ChEBI" id="CHEBI:74429"/>
        <note>m7GTP residue in mRNA cap</note>
    </ligandPart>
</feature>
<feature type="binding site" evidence="7">
    <location>
        <position position="110"/>
    </location>
    <ligand>
        <name>mRNA</name>
        <dbReference type="ChEBI" id="CHEBI:33699"/>
    </ligand>
    <ligandPart>
        <name>N(7)-methylguanosine 5'-triphosphate group</name>
        <dbReference type="ChEBI" id="CHEBI:74429"/>
        <note>m7GTP residue in mRNA cap</note>
    </ligandPart>
</feature>
<feature type="binding site" evidence="7">
    <location>
        <begin position="124"/>
        <end position="125"/>
    </location>
    <ligand>
        <name>mRNA</name>
        <dbReference type="ChEBI" id="CHEBI:33699"/>
    </ligand>
    <ligandPart>
        <name>N(7)-methylguanosine 5'-triphosphate group</name>
        <dbReference type="ChEBI" id="CHEBI:74429"/>
        <note>m7GTP residue in mRNA cap</note>
    </ligandPart>
</feature>
<feature type="binding site" evidence="7">
    <location>
        <begin position="174"/>
        <end position="179"/>
    </location>
    <ligand>
        <name>mRNA</name>
        <dbReference type="ChEBI" id="CHEBI:33699"/>
    </ligand>
    <ligandPart>
        <name>N(7)-methylguanosine 5'-triphosphate group</name>
        <dbReference type="ChEBI" id="CHEBI:74429"/>
        <note>m7GTP residue in mRNA cap</note>
    </ligandPart>
</feature>
<feature type="binding site" evidence="1">
    <location>
        <begin position="222"/>
        <end position="224"/>
    </location>
    <ligand>
        <name>mRNA</name>
        <dbReference type="ChEBI" id="CHEBI:33699"/>
    </ligand>
    <ligandPart>
        <name>N(7)-methylguanosine 5'-triphosphate group</name>
        <dbReference type="ChEBI" id="CHEBI:74429"/>
        <note>m7GTP residue in mRNA cap</note>
    </ligandPart>
</feature>
<feature type="modified residue" description="Phosphoserine" evidence="24">
    <location>
        <position position="13"/>
    </location>
</feature>
<feature type="modified residue" description="N6-acetyllysine; alternate" evidence="23">
    <location>
        <position position="134"/>
    </location>
</feature>
<feature type="cross-link" description="Glycyl lysine isopeptide (Lys-Gly) (interchain with G-Cter in ISG15); alternate" evidence="6">
    <location>
        <position position="134"/>
    </location>
</feature>
<feature type="cross-link" description="Glycyl lysine isopeptide (Lys-Gly) (interchain with G-Cter in ISG15)" evidence="6">
    <location>
        <position position="222"/>
    </location>
</feature>
<feature type="splice variant" id="VSP_054783" description="In isoform 2." evidence="19">
    <original>MPGRLGPQRLLF</original>
    <variation>DNSSFRNTKITL</variation>
    <location>
        <begin position="223"/>
        <end position="234"/>
    </location>
</feature>
<feature type="splice variant" id="VSP_054784" description="In isoform 2." evidence="19">
    <location>
        <begin position="235"/>
        <end position="245"/>
    </location>
</feature>
<feature type="mutagenesis site" description="Unable to bind capped mRNA." evidence="15">
    <original>W</original>
    <variation>A</variation>
    <location>
        <position position="63"/>
    </location>
</feature>
<feature type="mutagenesis site" description="Ability to bind capped mRNA reduced to 40% of wild-type." evidence="15">
    <original>W</original>
    <variation>A</variation>
    <location>
        <position position="95"/>
    </location>
</feature>
<feature type="mutagenesis site" description="Does not affect ubiquitination by ARIH1; when associated with R-130; R-134 and R-222." evidence="10">
    <original>K</original>
    <variation>R</variation>
    <location>
        <position position="121"/>
    </location>
</feature>
<feature type="mutagenesis site" description="Unable to bind capped mRNA." evidence="15">
    <original>WED</original>
    <variation>FAA</variation>
    <location>
        <begin position="124"/>
        <end position="126"/>
    </location>
</feature>
<feature type="mutagenesis site" description="Ability to bind capped mRNA reduced to less than 10% of wild-type." evidence="15">
    <original>W</original>
    <variation>A</variation>
    <location>
        <position position="124"/>
    </location>
</feature>
<feature type="mutagenesis site" description="Ability to bind capped mRNA reduced to 13% of wild-type." evidence="15">
    <original>W</original>
    <variation>F</variation>
    <location>
        <position position="124"/>
    </location>
</feature>
<feature type="mutagenesis site" description="Ability to bind capped mRNA reduced to less than 10% of wild-type." evidence="15">
    <original>E</original>
    <variation>A</variation>
    <location>
        <position position="125"/>
    </location>
</feature>
<feature type="mutagenesis site" description="Slight reduction in ability to bind capped mRNA." evidence="15">
    <original>D</original>
    <variation>A</variation>
    <location>
        <position position="126"/>
    </location>
</feature>
<feature type="mutagenesis site" description="Does not affect ubiquitination by ARIH1; when associated with R-121; R-134 and R-222." evidence="10">
    <original>K</original>
    <variation>R</variation>
    <location>
        <position position="130"/>
    </location>
</feature>
<feature type="mutagenesis site" description="Does not affect ubiquitination by ARIH1; when associated with R-121; R-130 and R-222." evidence="10">
    <original>K</original>
    <variation>R</variation>
    <location>
        <position position="134"/>
    </location>
</feature>
<feature type="mutagenesis site" description="Unable to bind capped mRNA." evidence="15">
    <original>W</original>
    <variation>A</variation>
    <location>
        <position position="135"/>
    </location>
</feature>
<feature type="mutagenesis site" description="Unable to bind capped mRNA." evidence="15">
    <original>W</original>
    <variation>A</variation>
    <location>
        <position position="148"/>
    </location>
</feature>
<feature type="mutagenesis site" description="Ability to bind capped mRNA reduced to less than 10% of wild-type." evidence="15">
    <original>W</original>
    <variation>A</variation>
    <location>
        <position position="183"/>
    </location>
</feature>
<feature type="mutagenesis site" description="Unable to bind capped mRNA." evidence="15">
    <original>W</original>
    <variation>F</variation>
    <location>
        <position position="183"/>
    </location>
</feature>
<feature type="mutagenesis site" description="Does not affect ubiquitination by ARIH1; when associated with R-121; R-130 and R-134." evidence="10">
    <original>K</original>
    <variation>R</variation>
    <location>
        <position position="222"/>
    </location>
</feature>
<feature type="sequence conflict" description="In Ref. 3; AAC39871." evidence="19" ref="3">
    <original>MNNKFDALKDDDSGDHDQNEENSTQKD</original>
    <variation>MMTVGTMIRMKKTAHRKI</variation>
    <location>
        <begin position="1"/>
        <end position="27"/>
    </location>
</feature>
<feature type="strand" evidence="25">
    <location>
        <begin position="55"/>
        <end position="67"/>
    </location>
</feature>
<feature type="helix" evidence="25">
    <location>
        <begin position="75"/>
        <end position="81"/>
    </location>
</feature>
<feature type="strand" evidence="25">
    <location>
        <begin position="82"/>
        <end position="90"/>
    </location>
</feature>
<feature type="helix" evidence="25">
    <location>
        <begin position="91"/>
        <end position="98"/>
    </location>
</feature>
<feature type="helix" evidence="25">
    <location>
        <begin position="104"/>
        <end position="106"/>
    </location>
</feature>
<feature type="strand" evidence="25">
    <location>
        <begin position="109"/>
        <end position="117"/>
    </location>
</feature>
<feature type="turn" evidence="25">
    <location>
        <begin position="127"/>
        <end position="131"/>
    </location>
</feature>
<feature type="strand" evidence="25">
    <location>
        <begin position="133"/>
        <end position="139"/>
    </location>
</feature>
<feature type="helix" evidence="25">
    <location>
        <begin position="144"/>
        <end position="156"/>
    </location>
</feature>
<feature type="turn" evidence="26">
    <location>
        <begin position="157"/>
        <end position="160"/>
    </location>
</feature>
<feature type="strand" evidence="25">
    <location>
        <begin position="166"/>
        <end position="173"/>
    </location>
</feature>
<feature type="strand" evidence="25">
    <location>
        <begin position="178"/>
        <end position="185"/>
    </location>
</feature>
<feature type="helix" evidence="25">
    <location>
        <begin position="190"/>
        <end position="203"/>
    </location>
</feature>
<feature type="strand" evidence="25">
    <location>
        <begin position="212"/>
        <end position="216"/>
    </location>
</feature>
<feature type="helix" evidence="25">
    <location>
        <begin position="217"/>
        <end position="222"/>
    </location>
</feature>
<dbReference type="EMBL" id="AF047695">
    <property type="protein sequence ID" value="AAC18565.1"/>
    <property type="molecule type" value="mRNA"/>
</dbReference>
<dbReference type="EMBL" id="AF068117">
    <property type="protein sequence ID" value="AAC19374.1"/>
    <property type="molecule type" value="mRNA"/>
</dbReference>
<dbReference type="EMBL" id="AF038957">
    <property type="protein sequence ID" value="AAC39871.1"/>
    <property type="molecule type" value="mRNA"/>
</dbReference>
<dbReference type="EMBL" id="AC073254">
    <property type="status" value="NOT_ANNOTATED_CDS"/>
    <property type="molecule type" value="Genomic_DNA"/>
</dbReference>
<dbReference type="EMBL" id="AC092165">
    <property type="status" value="NOT_ANNOTATED_CDS"/>
    <property type="molecule type" value="Genomic_DNA"/>
</dbReference>
<dbReference type="EMBL" id="AC093383">
    <property type="status" value="NOT_ANNOTATED_CDS"/>
    <property type="molecule type" value="Genomic_DNA"/>
</dbReference>
<dbReference type="EMBL" id="CH471063">
    <property type="protein sequence ID" value="EAW71008.1"/>
    <property type="molecule type" value="Genomic_DNA"/>
</dbReference>
<dbReference type="EMBL" id="BC005392">
    <property type="protein sequence ID" value="AAH05392.1"/>
    <property type="molecule type" value="mRNA"/>
</dbReference>
<dbReference type="EMBL" id="BC005874">
    <property type="protein sequence ID" value="AAH05874.1"/>
    <property type="molecule type" value="mRNA"/>
</dbReference>
<dbReference type="EMBL" id="BC021226">
    <property type="protein sequence ID" value="AAH21226.1"/>
    <property type="molecule type" value="mRNA"/>
</dbReference>
<dbReference type="EMBL" id="BC021690">
    <property type="protein sequence ID" value="AAH21690.1"/>
    <property type="molecule type" value="mRNA"/>
</dbReference>
<dbReference type="CCDS" id="CCDS2496.1">
    <molecule id="O60573-1"/>
</dbReference>
<dbReference type="CCDS" id="CCDS63159.1">
    <molecule id="O60573-2"/>
</dbReference>
<dbReference type="RefSeq" id="NP_001263265.1">
    <molecule id="O60573-2"/>
    <property type="nucleotide sequence ID" value="NM_001276336.2"/>
</dbReference>
<dbReference type="RefSeq" id="NP_004837.1">
    <molecule id="O60573-1"/>
    <property type="nucleotide sequence ID" value="NM_004846.4"/>
</dbReference>
<dbReference type="PDB" id="2JGB">
    <property type="method" value="X-ray"/>
    <property type="resolution" value="1.70 A"/>
    <property type="chains" value="A=45-234"/>
</dbReference>
<dbReference type="PDB" id="2JGC">
    <property type="method" value="X-ray"/>
    <property type="resolution" value="2.40 A"/>
    <property type="chains" value="A=45-234"/>
</dbReference>
<dbReference type="PDB" id="5NVK">
    <property type="method" value="X-ray"/>
    <property type="resolution" value="2.90 A"/>
    <property type="chains" value="A/C/E/G=52-234"/>
</dbReference>
<dbReference type="PDB" id="5NVL">
    <property type="method" value="X-ray"/>
    <property type="resolution" value="2.30 A"/>
    <property type="chains" value="A/C=52-234"/>
</dbReference>
<dbReference type="PDB" id="5NVM">
    <property type="method" value="X-ray"/>
    <property type="resolution" value="2.00 A"/>
    <property type="chains" value="A/C=52-234"/>
</dbReference>
<dbReference type="PDB" id="5NVN">
    <property type="method" value="X-ray"/>
    <property type="resolution" value="1.90 A"/>
    <property type="chains" value="A/C=52-234"/>
</dbReference>
<dbReference type="PDB" id="5XLN">
    <property type="method" value="X-ray"/>
    <property type="resolution" value="1.90 A"/>
    <property type="chains" value="A=45-234"/>
</dbReference>
<dbReference type="PDBsum" id="2JGB"/>
<dbReference type="PDBsum" id="2JGC"/>
<dbReference type="PDBsum" id="5NVK"/>
<dbReference type="PDBsum" id="5NVL"/>
<dbReference type="PDBsum" id="5NVM"/>
<dbReference type="PDBsum" id="5NVN"/>
<dbReference type="PDBsum" id="5XLN"/>
<dbReference type="SMR" id="O60573"/>
<dbReference type="BioGRID" id="114856">
    <property type="interactions" value="266"/>
</dbReference>
<dbReference type="ComplexPortal" id="CPX-2332">
    <property type="entry name" value="4EHP-GIGYF2 co-translational mRNA decay complex, ZNF598 variant"/>
</dbReference>
<dbReference type="ComplexPortal" id="CPX-2336">
    <property type="entry name" value="4EHP-GIGYF1 co-translational mRNA decay complex, ZNF598 variant"/>
</dbReference>
<dbReference type="ComplexPortal" id="CPX-2338">
    <property type="entry name" value="4EHP-GIGYF2 co-translational mRNA decay complex, DDX6 variant"/>
</dbReference>
<dbReference type="ComplexPortal" id="CPX-2342">
    <property type="entry name" value="4EHP-GIGYF1 co-translational mRNA decay complex, DDX6 variant"/>
</dbReference>
<dbReference type="CORUM" id="O60573"/>
<dbReference type="DIP" id="DIP-32578N"/>
<dbReference type="FunCoup" id="O60573">
    <property type="interactions" value="2624"/>
</dbReference>
<dbReference type="IntAct" id="O60573">
    <property type="interactions" value="99"/>
</dbReference>
<dbReference type="MINT" id="O60573"/>
<dbReference type="STRING" id="9606.ENSP00000258416"/>
<dbReference type="GlyGen" id="O60573">
    <property type="glycosylation" value="1 site, 1 N-linked glycan (1 site)"/>
</dbReference>
<dbReference type="iPTMnet" id="O60573"/>
<dbReference type="PhosphoSitePlus" id="O60573"/>
<dbReference type="BioMuta" id="EIF4E2"/>
<dbReference type="jPOST" id="O60573"/>
<dbReference type="MassIVE" id="O60573"/>
<dbReference type="PaxDb" id="9606-ENSP00000258416"/>
<dbReference type="PeptideAtlas" id="O60573"/>
<dbReference type="ProteomicsDB" id="49475">
    <molecule id="O60573-1"/>
</dbReference>
<dbReference type="ProteomicsDB" id="7393"/>
<dbReference type="Pumba" id="O60573"/>
<dbReference type="Antibodypedia" id="20222">
    <property type="antibodies" value="435 antibodies from 31 providers"/>
</dbReference>
<dbReference type="DNASU" id="9470"/>
<dbReference type="Ensembl" id="ENST00000258416.8">
    <molecule id="O60573-1"/>
    <property type="protein sequence ID" value="ENSP00000258416.3"/>
    <property type="gene ID" value="ENSG00000135930.15"/>
</dbReference>
<dbReference type="Ensembl" id="ENST00000409098.5">
    <molecule id="O60573-2"/>
    <property type="protein sequence ID" value="ENSP00000386996.1"/>
    <property type="gene ID" value="ENSG00000135930.15"/>
</dbReference>
<dbReference type="GeneID" id="9470"/>
<dbReference type="KEGG" id="hsa:9470"/>
<dbReference type="MANE-Select" id="ENST00000258416.8">
    <property type="protein sequence ID" value="ENSP00000258416.3"/>
    <property type="RefSeq nucleotide sequence ID" value="NM_004846.4"/>
    <property type="RefSeq protein sequence ID" value="NP_004837.1"/>
</dbReference>
<dbReference type="UCSC" id="uc002vtb.3">
    <molecule id="O60573-1"/>
    <property type="organism name" value="human"/>
</dbReference>
<dbReference type="AGR" id="HGNC:3293"/>
<dbReference type="CTD" id="9470"/>
<dbReference type="DisGeNET" id="9470"/>
<dbReference type="GeneCards" id="EIF4E2"/>
<dbReference type="HGNC" id="HGNC:3293">
    <property type="gene designation" value="EIF4E2"/>
</dbReference>
<dbReference type="HPA" id="ENSG00000135930">
    <property type="expression patterns" value="Low tissue specificity"/>
</dbReference>
<dbReference type="MIM" id="605895">
    <property type="type" value="gene"/>
</dbReference>
<dbReference type="neXtProt" id="NX_O60573"/>
<dbReference type="OpenTargets" id="ENSG00000135930"/>
<dbReference type="PharmGKB" id="PA27720"/>
<dbReference type="VEuPathDB" id="HostDB:ENSG00000135930"/>
<dbReference type="eggNOG" id="KOG1669">
    <property type="taxonomic scope" value="Eukaryota"/>
</dbReference>
<dbReference type="GeneTree" id="ENSGT00940000154694"/>
<dbReference type="InParanoid" id="O60573"/>
<dbReference type="OMA" id="VWNKTAN"/>
<dbReference type="OrthoDB" id="590761at2759"/>
<dbReference type="PAN-GO" id="O60573">
    <property type="GO annotations" value="3 GO annotations based on evolutionary models"/>
</dbReference>
<dbReference type="PhylomeDB" id="O60573"/>
<dbReference type="TreeFam" id="TF101529"/>
<dbReference type="PathwayCommons" id="O60573"/>
<dbReference type="Reactome" id="R-HSA-1169408">
    <property type="pathway name" value="ISG15 antiviral mechanism"/>
</dbReference>
<dbReference type="SignaLink" id="O60573"/>
<dbReference type="SIGNOR" id="O60573"/>
<dbReference type="BioGRID-ORCS" id="9470">
    <property type="hits" value="121 hits in 1177 CRISPR screens"/>
</dbReference>
<dbReference type="CD-CODE" id="232F8A39">
    <property type="entry name" value="P-body"/>
</dbReference>
<dbReference type="CD-CODE" id="DEE660B4">
    <property type="entry name" value="Stress granule"/>
</dbReference>
<dbReference type="ChiTaRS" id="EIF4E2">
    <property type="organism name" value="human"/>
</dbReference>
<dbReference type="EvolutionaryTrace" id="O60573"/>
<dbReference type="GeneWiki" id="EIF4E2"/>
<dbReference type="GenomeRNAi" id="9470"/>
<dbReference type="Pharos" id="O60573">
    <property type="development level" value="Tbio"/>
</dbReference>
<dbReference type="PRO" id="PR:O60573"/>
<dbReference type="Proteomes" id="UP000005640">
    <property type="component" value="Chromosome 2"/>
</dbReference>
<dbReference type="RNAct" id="O60573">
    <property type="molecule type" value="protein"/>
</dbReference>
<dbReference type="Bgee" id="ENSG00000135930">
    <property type="expression patterns" value="Expressed in monocyte and 195 other cell types or tissues"/>
</dbReference>
<dbReference type="ExpressionAtlas" id="O60573">
    <property type="expression patterns" value="baseline and differential"/>
</dbReference>
<dbReference type="GO" id="GO:0005737">
    <property type="term" value="C:cytoplasm"/>
    <property type="evidence" value="ECO:0000314"/>
    <property type="project" value="UniProtKB"/>
</dbReference>
<dbReference type="GO" id="GO:0005829">
    <property type="term" value="C:cytosol"/>
    <property type="evidence" value="ECO:0000304"/>
    <property type="project" value="Reactome"/>
</dbReference>
<dbReference type="GO" id="GO:0016281">
    <property type="term" value="C:eukaryotic translation initiation factor 4F complex"/>
    <property type="evidence" value="ECO:0000318"/>
    <property type="project" value="GO_Central"/>
</dbReference>
<dbReference type="GO" id="GO:0000932">
    <property type="term" value="C:P-body"/>
    <property type="evidence" value="ECO:0000314"/>
    <property type="project" value="UniProtKB"/>
</dbReference>
<dbReference type="GO" id="GO:0098808">
    <property type="term" value="F:mRNA cap binding"/>
    <property type="evidence" value="ECO:0000314"/>
    <property type="project" value="UniProtKB"/>
</dbReference>
<dbReference type="GO" id="GO:0000340">
    <property type="term" value="F:RNA 7-methylguanosine cap binding"/>
    <property type="evidence" value="ECO:0000314"/>
    <property type="project" value="UniProt"/>
</dbReference>
<dbReference type="GO" id="GO:0003723">
    <property type="term" value="F:RNA binding"/>
    <property type="evidence" value="ECO:0007005"/>
    <property type="project" value="UniProtKB"/>
</dbReference>
<dbReference type="GO" id="GO:0000339">
    <property type="term" value="F:RNA cap binding"/>
    <property type="evidence" value="ECO:0000304"/>
    <property type="project" value="ProtInc"/>
</dbReference>
<dbReference type="GO" id="GO:0008135">
    <property type="term" value="F:translation factor activity, RNA binding"/>
    <property type="evidence" value="ECO:0000304"/>
    <property type="project" value="ProtInc"/>
</dbReference>
<dbReference type="GO" id="GO:0003743">
    <property type="term" value="F:translation initiation factor activity"/>
    <property type="evidence" value="ECO:0000318"/>
    <property type="project" value="GO_Central"/>
</dbReference>
<dbReference type="GO" id="GO:0031625">
    <property type="term" value="F:ubiquitin protein ligase binding"/>
    <property type="evidence" value="ECO:0000353"/>
    <property type="project" value="UniProtKB"/>
</dbReference>
<dbReference type="GO" id="GO:0035278">
    <property type="term" value="P:miRNA-mediated gene silencing by inhibition of translation"/>
    <property type="evidence" value="ECO:0000314"/>
    <property type="project" value="UniProtKB"/>
</dbReference>
<dbReference type="GO" id="GO:0017148">
    <property type="term" value="P:negative regulation of translation"/>
    <property type="evidence" value="ECO:0000315"/>
    <property type="project" value="MGI"/>
</dbReference>
<dbReference type="GO" id="GO:0045947">
    <property type="term" value="P:negative regulation of translational initiation"/>
    <property type="evidence" value="ECO:0000314"/>
    <property type="project" value="UniProt"/>
</dbReference>
<dbReference type="GO" id="GO:0060339">
    <property type="term" value="P:negative regulation of type I interferon-mediated signaling pathway"/>
    <property type="evidence" value="ECO:0000314"/>
    <property type="project" value="UniProt"/>
</dbReference>
<dbReference type="GO" id="GO:0072344">
    <property type="term" value="P:rescue of stalled ribosome"/>
    <property type="evidence" value="ECO:0000314"/>
    <property type="project" value="UniProt"/>
</dbReference>
<dbReference type="GO" id="GO:0006413">
    <property type="term" value="P:translational initiation"/>
    <property type="evidence" value="ECO:0000318"/>
    <property type="project" value="GO_Central"/>
</dbReference>
<dbReference type="FunFam" id="3.30.760.10:FF:000001">
    <property type="entry name" value="Eukaryotic translation initiation factor 4E type 2 isoformX2"/>
    <property type="match status" value="1"/>
</dbReference>
<dbReference type="Gene3D" id="3.30.760.10">
    <property type="entry name" value="RNA Cap, Translation Initiation Factor Eif4e"/>
    <property type="match status" value="1"/>
</dbReference>
<dbReference type="IDEAL" id="IID00342"/>
<dbReference type="InterPro" id="IPR023398">
    <property type="entry name" value="TIF_eIF4e-like"/>
</dbReference>
<dbReference type="InterPro" id="IPR001040">
    <property type="entry name" value="TIF_eIF_4E"/>
</dbReference>
<dbReference type="InterPro" id="IPR019770">
    <property type="entry name" value="TIF_eIF_4E_CS"/>
</dbReference>
<dbReference type="PANTHER" id="PTHR11960">
    <property type="entry name" value="EUKARYOTIC TRANSLATION INITIATION FACTOR 4E RELATED"/>
    <property type="match status" value="1"/>
</dbReference>
<dbReference type="PANTHER" id="PTHR11960:SF17">
    <property type="entry name" value="EUKARYOTIC TRANSLATION INITIATION FACTOR 4E TYPE 2"/>
    <property type="match status" value="1"/>
</dbReference>
<dbReference type="Pfam" id="PF01652">
    <property type="entry name" value="IF4E"/>
    <property type="match status" value="1"/>
</dbReference>
<dbReference type="SUPFAM" id="SSF55418">
    <property type="entry name" value="eIF4e-like"/>
    <property type="match status" value="1"/>
</dbReference>
<dbReference type="PROSITE" id="PS00813">
    <property type="entry name" value="IF4E"/>
    <property type="match status" value="1"/>
</dbReference>
<evidence type="ECO:0000250" key="1">
    <source>
        <dbReference type="UniProtKB" id="P06730"/>
    </source>
</evidence>
<evidence type="ECO:0000250" key="2">
    <source>
        <dbReference type="UniProtKB" id="Q8BMB3"/>
    </source>
</evidence>
<evidence type="ECO:0000256" key="3">
    <source>
        <dbReference type="SAM" id="MobiDB-lite"/>
    </source>
</evidence>
<evidence type="ECO:0000269" key="4">
    <source>
    </source>
</evidence>
<evidence type="ECO:0000269" key="5">
    <source>
    </source>
</evidence>
<evidence type="ECO:0000269" key="6">
    <source>
    </source>
</evidence>
<evidence type="ECO:0000269" key="7">
    <source>
    </source>
</evidence>
<evidence type="ECO:0000269" key="8">
    <source>
    </source>
</evidence>
<evidence type="ECO:0000269" key="9">
    <source>
    </source>
</evidence>
<evidence type="ECO:0000269" key="10">
    <source>
    </source>
</evidence>
<evidence type="ECO:0000269" key="11">
    <source>
    </source>
</evidence>
<evidence type="ECO:0000269" key="12">
    <source>
    </source>
</evidence>
<evidence type="ECO:0000269" key="13">
    <source>
    </source>
</evidence>
<evidence type="ECO:0000269" key="14">
    <source>
    </source>
</evidence>
<evidence type="ECO:0000269" key="15">
    <source>
    </source>
</evidence>
<evidence type="ECO:0000303" key="16">
    <source>
    </source>
</evidence>
<evidence type="ECO:0000303" key="17">
    <source>
    </source>
</evidence>
<evidence type="ECO:0000303" key="18">
    <source>
    </source>
</evidence>
<evidence type="ECO:0000305" key="19"/>
<evidence type="ECO:0000312" key="20">
    <source>
        <dbReference type="HGNC" id="HGNC:3293"/>
    </source>
</evidence>
<evidence type="ECO:0007744" key="21">
    <source>
        <dbReference type="PDB" id="2JGB"/>
    </source>
</evidence>
<evidence type="ECO:0007744" key="22">
    <source>
        <dbReference type="PDB" id="2JGC"/>
    </source>
</evidence>
<evidence type="ECO:0007744" key="23">
    <source>
    </source>
</evidence>
<evidence type="ECO:0007744" key="24">
    <source>
    </source>
</evidence>
<evidence type="ECO:0007829" key="25">
    <source>
        <dbReference type="PDB" id="2JGB"/>
    </source>
</evidence>
<evidence type="ECO:0007829" key="26">
    <source>
        <dbReference type="PDB" id="5XLN"/>
    </source>
</evidence>
<keyword id="KW-0002">3D-structure</keyword>
<keyword id="KW-0007">Acetylation</keyword>
<keyword id="KW-0025">Alternative splicing</keyword>
<keyword id="KW-0963">Cytoplasm</keyword>
<keyword id="KW-0396">Initiation factor</keyword>
<keyword id="KW-1017">Isopeptide bond</keyword>
<keyword id="KW-0597">Phosphoprotein</keyword>
<keyword id="KW-0648">Protein biosynthesis</keyword>
<keyword id="KW-1267">Proteomics identification</keyword>
<keyword id="KW-1185">Reference proteome</keyword>
<keyword id="KW-0694">RNA-binding</keyword>
<keyword id="KW-0943">RNA-mediated gene silencing</keyword>
<keyword id="KW-0810">Translation regulation</keyword>
<keyword id="KW-0832">Ubl conjugation</keyword>
<comment type="function">
    <text evidence="2 7 8 10 11 13 15">Recognizes and binds the 7-methylguanosine-containing mRNA cap during an early step in the initiation. Acts as a repressor of translation initiation (PubMed:17368478, PubMed:22751931, PubMed:25624349, PubMed:33581076, PubMed:9582349). In contrast to EIF4E, it is unable to bind eIF4G (EIF4G1, EIF4G2 or EIF4G3), suggesting that it acts by competing with EIF4E and block assembly of eIF4F at the cap (By similarity). In P-bodies, component of a complex that promotes miRNA-mediated translational repression (PubMed:28487484). Involved in virus-induced host response by mediating miRNA MIR34A-induced translational silencing which controls IFNB1 production by a negative feedback mechanism (PubMed:28487484, PubMed:33581076).</text>
</comment>
<comment type="function">
    <text evidence="8 12 14">Component of the 4EHP-GYF2 complex, a multiprotein complex that acts as a repressor of translation initiation (PubMed:22751931, PubMed:35878012). In association with GIGYF2, assists ribosome-associated quality control (RQC) by sequestering the mRNA cap, blocking ribosome initiation and decreasing the translational load on problematic messages. Part of a pathway that works in parallel to RQC-mediated degradation of the stalled nascent polypeptide. GIGYF2 and EIF4E2 work downstream and independently of ZNF598, which seems to work as a scaffold that can recruit them to faulty mRNA even if alternative recruitment mechanisms may exist (PubMed:32726578).</text>
</comment>
<comment type="function">
    <text evidence="14">(Microbial infection) Upon SARS coronavirus-2/SARS-CoV-2 infection, the interaction with non-structural protein 2 (nsp2) with GIGYF2 enhances GIGYF2 binding to EIF4E2 and increases repression of translation initiation of genes involved in antiviral innate immune response such as IFNB1.</text>
</comment>
<comment type="subunit">
    <text evidence="2 5 7 8 9 11 12 13">Interacts with EIF4EBP1, EIF4EBP2 and EIF4EBP3 (PubMed:15153109, PubMed:17368478). Does not interact with eIF4G (EIF4G1, EIF4G2 or EIF4G3) (By similarity). Component of the 4EHP-GYF2 complex, at least composed of EIF4E2, GIGYF2 and ZNF598 (PubMed:22751931, PubMed:32726578). Interacts with GIGYF2 (via the 4EHP-binding motif); the interaction is direct (PubMed:22751931, PubMed:32726578, PubMed:33581076). Interacts with EIF4ENIF1/4E-T (via YXXXXLphi motif); increasing affinity for the 7-methylguanosine-containing mRNA cap (PubMed:23991149, PubMed:28487484).</text>
</comment>
<comment type="interaction">
    <interactant intactId="EBI-398610">
        <id>O60573</id>
    </interactant>
    <interactant intactId="EBI-10173507">
        <id>Q6UY14-3</id>
        <label>ADAMTSL4</label>
    </interactant>
    <organismsDiffer>false</organismsDiffer>
    <experiments>3</experiments>
</comment>
<comment type="interaction">
    <interactant intactId="EBI-398610">
        <id>O60573</id>
    </interactant>
    <interactant intactId="EBI-10187270">
        <id>Q9Y2J4-4</id>
        <label>AMOTL2</label>
    </interactant>
    <organismsDiffer>false</organismsDiffer>
    <experiments>3</experiments>
</comment>
<comment type="interaction">
    <interactant intactId="EBI-398610">
        <id>O60573</id>
    </interactant>
    <interactant intactId="EBI-751319">
        <id>Q9H257</id>
        <label>CARD9</label>
    </interactant>
    <organismsDiffer>false</organismsDiffer>
    <experiments>3</experiments>
</comment>
<comment type="interaction">
    <interactant intactId="EBI-398610">
        <id>O60573</id>
    </interactant>
    <interactant intactId="EBI-741724">
        <id>Q8NA61</id>
        <label>CBY2</label>
    </interactant>
    <organismsDiffer>false</organismsDiffer>
    <experiments>3</experiments>
</comment>
<comment type="interaction">
    <interactant intactId="EBI-398610">
        <id>O60573</id>
    </interactant>
    <interactant intactId="EBI-1181367">
        <id>Q01850</id>
        <label>CDR2</label>
    </interactant>
    <organismsDiffer>false</organismsDiffer>
    <experiments>3</experiments>
</comment>
<comment type="interaction">
    <interactant intactId="EBI-398610">
        <id>O60573</id>
    </interactant>
    <interactant intactId="EBI-74090">
        <id>Q13541</id>
        <label>EIF4EBP1</label>
    </interactant>
    <organismsDiffer>false</organismsDiffer>
    <experiments>3</experiments>
</comment>
<comment type="interaction">
    <interactant intactId="EBI-398610">
        <id>O60573</id>
    </interactant>
    <interactant intactId="EBI-301024">
        <id>Q9NRA8</id>
        <label>EIF4ENIF1</label>
    </interactant>
    <organismsDiffer>false</organismsDiffer>
    <experiments>6</experiments>
</comment>
<comment type="interaction">
    <interactant intactId="EBI-398610">
        <id>O60573</id>
    </interactant>
    <interactant intactId="EBI-447470">
        <id>Q99814</id>
        <label>EPAS1</label>
    </interactant>
    <organismsDiffer>false</organismsDiffer>
    <experiments>2</experiments>
</comment>
<comment type="interaction">
    <interactant intactId="EBI-398610">
        <id>O60573</id>
    </interactant>
    <interactant intactId="EBI-10172004">
        <id>Q8IX15-3</id>
        <label>HOMEZ</label>
    </interactant>
    <organismsDiffer>false</organismsDiffer>
    <experiments>3</experiments>
</comment>
<comment type="interaction">
    <interactant intactId="EBI-398610">
        <id>O60573</id>
    </interactant>
    <interactant intactId="EBI-466029">
        <id>P42858</id>
        <label>HTT</label>
    </interactant>
    <organismsDiffer>false</organismsDiffer>
    <experiments>4</experiments>
</comment>
<comment type="interaction">
    <interactant intactId="EBI-398610">
        <id>O60573</id>
    </interactant>
    <interactant intactId="EBI-10171552">
        <id>A1A4E9</id>
        <label>KRT13</label>
    </interactant>
    <organismsDiffer>false</organismsDiffer>
    <experiments>3</experiments>
</comment>
<comment type="interaction">
    <interactant intactId="EBI-398610">
        <id>O60573</id>
    </interactant>
    <interactant intactId="EBI-742756">
        <id>P08727</id>
        <label>KRT19</label>
    </interactant>
    <organismsDiffer>false</organismsDiffer>
    <experiments>3</experiments>
</comment>
<comment type="interaction">
    <interactant intactId="EBI-398610">
        <id>O60573</id>
    </interactant>
    <interactant intactId="EBI-948001">
        <id>Q15323</id>
        <label>KRT31</label>
    </interactant>
    <organismsDiffer>false</organismsDiffer>
    <experiments>3</experiments>
</comment>
<comment type="interaction">
    <interactant intactId="EBI-398610">
        <id>O60573</id>
    </interactant>
    <interactant intactId="EBI-10171697">
        <id>Q6A162</id>
        <label>KRT40</label>
    </interactant>
    <organismsDiffer>false</organismsDiffer>
    <experiments>3</experiments>
</comment>
<comment type="interaction">
    <interactant intactId="EBI-398610">
        <id>O60573</id>
    </interactant>
    <interactant intactId="EBI-10172150">
        <id>P60370</id>
        <label>KRTAP10-5</label>
    </interactant>
    <organismsDiffer>false</organismsDiffer>
    <experiments>3</experiments>
</comment>
<comment type="interaction">
    <interactant intactId="EBI-398610">
        <id>O60573</id>
    </interactant>
    <interactant intactId="EBI-10171774">
        <id>P60410</id>
        <label>KRTAP10-8</label>
    </interactant>
    <organismsDiffer>false</organismsDiffer>
    <experiments>3</experiments>
</comment>
<comment type="interaction">
    <interactant intactId="EBI-398610">
        <id>O60573</id>
    </interactant>
    <interactant intactId="EBI-10172052">
        <id>P60411</id>
        <label>KRTAP10-9</label>
    </interactant>
    <organismsDiffer>false</organismsDiffer>
    <experiments>3</experiments>
</comment>
<comment type="interaction">
    <interactant intactId="EBI-398610">
        <id>O60573</id>
    </interactant>
    <interactant intactId="EBI-741037">
        <id>Q9BRK4</id>
        <label>LZTS2</label>
    </interactant>
    <organismsDiffer>false</organismsDiffer>
    <experiments>3</experiments>
</comment>
<comment type="interaction">
    <interactant intactId="EBI-398610">
        <id>O60573</id>
    </interactant>
    <interactant intactId="EBI-716006">
        <id>Q9Y5V3</id>
        <label>MAGED1</label>
    </interactant>
    <organismsDiffer>false</organismsDiffer>
    <experiments>3</experiments>
</comment>
<comment type="interaction">
    <interactant intactId="EBI-398610">
        <id>O60573</id>
    </interactant>
    <interactant intactId="EBI-726739">
        <id>Q9UPY8</id>
        <label>MAPRE3</label>
    </interactant>
    <organismsDiffer>false</organismsDiffer>
    <experiments>3</experiments>
</comment>
<comment type="interaction">
    <interactant intactId="EBI-398610">
        <id>O60573</id>
    </interactant>
    <interactant intactId="EBI-2548751">
        <id>Q8TD10</id>
        <label>MIPOL1</label>
    </interactant>
    <organismsDiffer>false</organismsDiffer>
    <experiments>3</experiments>
</comment>
<comment type="interaction">
    <interactant intactId="EBI-398610">
        <id>O60573</id>
    </interactant>
    <interactant intactId="EBI-3906629">
        <id>P15173</id>
        <label>MYOG</label>
    </interactant>
    <organismsDiffer>false</organismsDiffer>
    <experiments>4</experiments>
</comment>
<comment type="interaction">
    <interactant intactId="EBI-398610">
        <id>O60573</id>
    </interactant>
    <interactant intactId="EBI-10172876">
        <id>Q7Z6G3-2</id>
        <label>NECAB2</label>
    </interactant>
    <organismsDiffer>false</organismsDiffer>
    <experiments>3</experiments>
</comment>
<comment type="interaction">
    <interactant intactId="EBI-398610">
        <id>O60573</id>
    </interactant>
    <interactant intactId="EBI-945833">
        <id>Q7Z3S9</id>
        <label>NOTCH2NLA</label>
    </interactant>
    <organismsDiffer>false</organismsDiffer>
    <experiments>3</experiments>
</comment>
<comment type="interaction">
    <interactant intactId="EBI-398610">
        <id>O60573</id>
    </interactant>
    <interactant intactId="EBI-3957793">
        <id>Q9GZV8</id>
        <label>PRDM14</label>
    </interactant>
    <organismsDiffer>false</organismsDiffer>
    <experiments>3</experiments>
</comment>
<comment type="interaction">
    <interactant intactId="EBI-398610">
        <id>O60573</id>
    </interactant>
    <interactant intactId="EBI-307352">
        <id>Q04864</id>
        <label>REL</label>
    </interactant>
    <organismsDiffer>false</organismsDiffer>
    <experiments>3</experiments>
</comment>
<comment type="interaction">
    <interactant intactId="EBI-398610">
        <id>O60573</id>
    </interactant>
    <interactant intactId="EBI-413317">
        <id>Q96R06</id>
        <label>SPAG5</label>
    </interactant>
    <organismsDiffer>false</organismsDiffer>
    <experiments>3</experiments>
</comment>
<comment type="interaction">
    <interactant intactId="EBI-398610">
        <id>O60573</id>
    </interactant>
    <interactant intactId="EBI-742487">
        <id>O43597</id>
        <label>SPRY2</label>
    </interactant>
    <organismsDiffer>false</organismsDiffer>
    <experiments>3</experiments>
</comment>
<comment type="interaction">
    <interactant intactId="EBI-398610">
        <id>O60573</id>
    </interactant>
    <interactant intactId="EBI-742268">
        <id>O75478</id>
        <label>TADA2A</label>
    </interactant>
    <organismsDiffer>false</organismsDiffer>
    <experiments>3</experiments>
</comment>
<comment type="interaction">
    <interactant intactId="EBI-398610">
        <id>O60573</id>
    </interactant>
    <interactant intactId="EBI-533224">
        <id>P15884</id>
        <label>TCF4</label>
    </interactant>
    <organismsDiffer>false</organismsDiffer>
    <experiments>3</experiments>
</comment>
<comment type="interaction">
    <interactant intactId="EBI-398610">
        <id>O60573</id>
    </interactant>
    <interactant intactId="EBI-717810">
        <id>Q08117</id>
        <label>TLE5</label>
    </interactant>
    <organismsDiffer>false</organismsDiffer>
    <experiments>3</experiments>
</comment>
<comment type="interaction">
    <interactant intactId="EBI-398610">
        <id>O60573</id>
    </interactant>
    <interactant intactId="EBI-719493">
        <id>P14373</id>
        <label>TRIM27</label>
    </interactant>
    <organismsDiffer>false</organismsDiffer>
    <experiments>3</experiments>
</comment>
<comment type="interaction">
    <interactant intactId="EBI-398610">
        <id>O60573</id>
    </interactant>
    <interactant intactId="EBI-2130429">
        <id>Q9BYV2</id>
        <label>TRIM54</label>
    </interactant>
    <organismsDiffer>false</organismsDiffer>
    <experiments>3</experiments>
</comment>
<comment type="interaction">
    <interactant intactId="EBI-398610">
        <id>O60573</id>
    </interactant>
    <interactant intactId="EBI-746004">
        <id>Q5T124</id>
        <label>UBXN11</label>
    </interactant>
    <organismsDiffer>false</organismsDiffer>
    <experiments>3</experiments>
</comment>
<comment type="interaction">
    <interactant intactId="EBI-398610">
        <id>O60573</id>
    </interactant>
    <interactant intactId="EBI-739895">
        <id>Q8N6Y0</id>
        <label>USHBP1</label>
    </interactant>
    <organismsDiffer>false</organismsDiffer>
    <experiments>3</experiments>
</comment>
<comment type="interaction">
    <interactant intactId="EBI-398610">
        <id>O60573</id>
    </interactant>
    <interactant intactId="EBI-946185">
        <id>Q70EL1</id>
        <label>USP54</label>
    </interactant>
    <organismsDiffer>false</organismsDiffer>
    <experiments>3</experiments>
</comment>
<comment type="interaction">
    <interactant intactId="EBI-398610">
        <id>O60573</id>
    </interactant>
    <interactant intactId="EBI-347088">
        <id>P63104</id>
        <label>YWHAZ</label>
    </interactant>
    <organismsDiffer>false</organismsDiffer>
    <experiments>2</experiments>
</comment>
<comment type="interaction">
    <interactant intactId="EBI-398610">
        <id>O60573</id>
    </interactant>
    <interactant intactId="EBI-395708">
        <id>Q96C00</id>
        <label>ZBTB9</label>
    </interactant>
    <organismsDiffer>false</organismsDiffer>
    <experiments>4</experiments>
</comment>
<comment type="interaction">
    <interactant intactId="EBI-32715389">
        <id>O60573-1</id>
    </interactant>
    <interactant intactId="EBI-74090">
        <id>Q13541</id>
        <label>EIF4EBP1</label>
    </interactant>
    <organismsDiffer>false</organismsDiffer>
    <experiments>6</experiments>
</comment>
<comment type="interaction">
    <interactant intactId="EBI-32715389">
        <id>O60573-1</id>
    </interactant>
    <interactant intactId="EBI-301024">
        <id>Q9NRA8</id>
        <label>EIF4ENIF1</label>
    </interactant>
    <organismsDiffer>false</organismsDiffer>
    <experiments>3</experiments>
</comment>
<comment type="interaction">
    <interactant intactId="EBI-32715389">
        <id>O60573-1</id>
    </interactant>
    <interactant intactId="EBI-947774">
        <id>O75420</id>
        <label>GIGYF1</label>
    </interactant>
    <organismsDiffer>false</organismsDiffer>
    <experiments>12</experiments>
</comment>
<comment type="interaction">
    <interactant intactId="EBI-32715389">
        <id>O60573-1</id>
    </interactant>
    <interactant intactId="EBI-765394">
        <id>Q6Y7W6</id>
        <label>GIGYF2</label>
    </interactant>
    <organismsDiffer>false</organismsDiffer>
    <experiments>6</experiments>
</comment>
<comment type="interaction">
    <interactant intactId="EBI-32715389">
        <id>O60573-1</id>
    </interactant>
    <interactant intactId="EBI-25762361">
        <id>Q6Y7W6-1</id>
        <label>GIGYF2</label>
    </interactant>
    <organismsDiffer>false</organismsDiffer>
    <experiments>11</experiments>
</comment>
<comment type="subcellular location">
    <subcellularLocation>
        <location evidence="9">Cytoplasm</location>
    </subcellularLocation>
    <subcellularLocation>
        <location evidence="9">Cytoplasm</location>
        <location evidence="9">P-body</location>
    </subcellularLocation>
</comment>
<comment type="alternative products">
    <event type="alternative splicing"/>
    <isoform>
        <id>O60573-1</id>
        <name>1</name>
        <sequence type="displayed"/>
    </isoform>
    <isoform>
        <id>O60573-2</id>
        <name>2</name>
        <sequence type="described" ref="VSP_054783 VSP_054784"/>
    </isoform>
</comment>
<comment type="PTM">
    <text evidence="4 10">Ubiquitinated by ARIH1 (PubMed:14623119, PubMed:25624349). The consequences of ubiquitination are however unclear: according to a report, EIF4E2 ubiquitination leads to promote EIF4E2 cap-binding and protein translation arrest (PubMed:25624349). According to another report ubiquitination leads to its subsequent degradation (PubMed:14623119).</text>
</comment>
<comment type="PTM">
    <text evidence="6">ISGylation enhances its cap structure-binding activity and translation-inhibition activity.</text>
</comment>
<comment type="similarity">
    <text evidence="19">Belongs to the eukaryotic initiation factor 4E family.</text>
</comment>
<protein>
    <recommendedName>
        <fullName evidence="16">Eukaryotic translation initiation factor 4E type 2</fullName>
        <shortName evidence="16">eIF-4E type 2</shortName>
        <shortName evidence="16">eIF4E type 2</shortName>
    </recommendedName>
    <alternativeName>
        <fullName>Eukaryotic translation initiation factor 4E homologous protein</fullName>
    </alternativeName>
    <alternativeName>
        <fullName>Eukaryotic translation initiation factor 4E-like 3</fullName>
    </alternativeName>
    <alternativeName>
        <fullName evidence="16">eIF4E-like protein 4E-LP</fullName>
    </alternativeName>
    <alternativeName>
        <fullName evidence="18">mRNA cap-binding protein 4EHP</fullName>
        <shortName evidence="17">h4EHP</shortName>
    </alternativeName>
    <alternativeName>
        <fullName>mRNA cap-binding protein type 3</fullName>
    </alternativeName>
</protein>
<reference key="1">
    <citation type="journal article" date="1998" name="J. Biol. Chem.">
        <title>Cloning and characterization of 4EHP, a novel mammalian eIF4E-related cap-binding protein.</title>
        <authorList>
            <person name="Rom E."/>
            <person name="Kim H.C."/>
            <person name="Gingras A.-C."/>
            <person name="Marcotrigiano J."/>
            <person name="Favre D."/>
            <person name="Olsen H."/>
            <person name="Burley S.K."/>
            <person name="Sonenberg N."/>
        </authorList>
    </citation>
    <scope>NUCLEOTIDE SEQUENCE [MRNA] (ISOFORM 1)</scope>
    <scope>FUNCTION</scope>
    <scope>3D-STRUCTURE MODELING</scope>
    <scope>MUTAGENESIS OF TRP-63; TRP-95; 124-TRP--ASP-126; TRP-124; GLU-125; ASP-126; TRP-135; TRP-148 AND TRP-183</scope>
    <source>
        <tissue>Follicular cell</tissue>
    </source>
</reference>
<reference key="2">
    <citation type="journal article" date="2004" name="Eur. J. Biochem.">
        <title>Characterization of mammalian eIF4E-family members.</title>
        <authorList>
            <person name="Joshi B."/>
            <person name="Cameron A."/>
            <person name="Jagus R."/>
        </authorList>
    </citation>
    <scope>NUCLEOTIDE SEQUENCE [MRNA] (ISOFORM 1)</scope>
    <scope>INTERACTION WITH EIF4EBP1; EIF4EBP2 AND EIF4EBP3</scope>
    <source>
        <tissue>Mammary gland</tissue>
    </source>
</reference>
<reference key="3">
    <citation type="journal article" date="1998" name="Proc. Natl. Acad. Sci. U.S.A.">
        <title>Identification of genes expressed in human CD34(+) hematopoietic stem/progenitor cells by expressed sequence tags and efficient full-length cDNA cloning.</title>
        <authorList>
            <person name="Mao M."/>
            <person name="Fu G."/>
            <person name="Wu J.-S."/>
            <person name="Zhang Q.-H."/>
            <person name="Zhou J."/>
            <person name="Kan L.-X."/>
            <person name="Huang Q.-H."/>
            <person name="He K.-L."/>
            <person name="Gu B.-W."/>
            <person name="Han Z.-G."/>
            <person name="Shen Y."/>
            <person name="Gu J."/>
            <person name="Yu Y.-P."/>
            <person name="Xu S.-H."/>
            <person name="Wang Y.-X."/>
            <person name="Chen S.-J."/>
            <person name="Chen Z."/>
        </authorList>
    </citation>
    <scope>NUCLEOTIDE SEQUENCE [LARGE SCALE MRNA] (ISOFORM 1)</scope>
    <source>
        <tissue>Umbilical cord blood</tissue>
    </source>
</reference>
<reference key="4">
    <citation type="journal article" date="2005" name="Nature">
        <title>Generation and annotation of the DNA sequences of human chromosomes 2 and 4.</title>
        <authorList>
            <person name="Hillier L.W."/>
            <person name="Graves T.A."/>
            <person name="Fulton R.S."/>
            <person name="Fulton L.A."/>
            <person name="Pepin K.H."/>
            <person name="Minx P."/>
            <person name="Wagner-McPherson C."/>
            <person name="Layman D."/>
            <person name="Wylie K."/>
            <person name="Sekhon M."/>
            <person name="Becker M.C."/>
            <person name="Fewell G.A."/>
            <person name="Delehaunty K.D."/>
            <person name="Miner T.L."/>
            <person name="Nash W.E."/>
            <person name="Kremitzki C."/>
            <person name="Oddy L."/>
            <person name="Du H."/>
            <person name="Sun H."/>
            <person name="Bradshaw-Cordum H."/>
            <person name="Ali J."/>
            <person name="Carter J."/>
            <person name="Cordes M."/>
            <person name="Harris A."/>
            <person name="Isak A."/>
            <person name="van Brunt A."/>
            <person name="Nguyen C."/>
            <person name="Du F."/>
            <person name="Courtney L."/>
            <person name="Kalicki J."/>
            <person name="Ozersky P."/>
            <person name="Abbott S."/>
            <person name="Armstrong J."/>
            <person name="Belter E.A."/>
            <person name="Caruso L."/>
            <person name="Cedroni M."/>
            <person name="Cotton M."/>
            <person name="Davidson T."/>
            <person name="Desai A."/>
            <person name="Elliott G."/>
            <person name="Erb T."/>
            <person name="Fronick C."/>
            <person name="Gaige T."/>
            <person name="Haakenson W."/>
            <person name="Haglund K."/>
            <person name="Holmes A."/>
            <person name="Harkins R."/>
            <person name="Kim K."/>
            <person name="Kruchowski S.S."/>
            <person name="Strong C.M."/>
            <person name="Grewal N."/>
            <person name="Goyea E."/>
            <person name="Hou S."/>
            <person name="Levy A."/>
            <person name="Martinka S."/>
            <person name="Mead K."/>
            <person name="McLellan M.D."/>
            <person name="Meyer R."/>
            <person name="Randall-Maher J."/>
            <person name="Tomlinson C."/>
            <person name="Dauphin-Kohlberg S."/>
            <person name="Kozlowicz-Reilly A."/>
            <person name="Shah N."/>
            <person name="Swearengen-Shahid S."/>
            <person name="Snider J."/>
            <person name="Strong J.T."/>
            <person name="Thompson J."/>
            <person name="Yoakum M."/>
            <person name="Leonard S."/>
            <person name="Pearman C."/>
            <person name="Trani L."/>
            <person name="Radionenko M."/>
            <person name="Waligorski J.E."/>
            <person name="Wang C."/>
            <person name="Rock S.M."/>
            <person name="Tin-Wollam A.-M."/>
            <person name="Maupin R."/>
            <person name="Latreille P."/>
            <person name="Wendl M.C."/>
            <person name="Yang S.-P."/>
            <person name="Pohl C."/>
            <person name="Wallis J.W."/>
            <person name="Spieth J."/>
            <person name="Bieri T.A."/>
            <person name="Berkowicz N."/>
            <person name="Nelson J.O."/>
            <person name="Osborne J."/>
            <person name="Ding L."/>
            <person name="Meyer R."/>
            <person name="Sabo A."/>
            <person name="Shotland Y."/>
            <person name="Sinha P."/>
            <person name="Wohldmann P.E."/>
            <person name="Cook L.L."/>
            <person name="Hickenbotham M.T."/>
            <person name="Eldred J."/>
            <person name="Williams D."/>
            <person name="Jones T.A."/>
            <person name="She X."/>
            <person name="Ciccarelli F.D."/>
            <person name="Izaurralde E."/>
            <person name="Taylor J."/>
            <person name="Schmutz J."/>
            <person name="Myers R.M."/>
            <person name="Cox D.R."/>
            <person name="Huang X."/>
            <person name="McPherson J.D."/>
            <person name="Mardis E.R."/>
            <person name="Clifton S.W."/>
            <person name="Warren W.C."/>
            <person name="Chinwalla A.T."/>
            <person name="Eddy S.R."/>
            <person name="Marra M.A."/>
            <person name="Ovcharenko I."/>
            <person name="Furey T.S."/>
            <person name="Miller W."/>
            <person name="Eichler E.E."/>
            <person name="Bork P."/>
            <person name="Suyama M."/>
            <person name="Torrents D."/>
            <person name="Waterston R.H."/>
            <person name="Wilson R.K."/>
        </authorList>
    </citation>
    <scope>NUCLEOTIDE SEQUENCE [LARGE SCALE GENOMIC DNA]</scope>
</reference>
<reference key="5">
    <citation type="submission" date="2005-07" db="EMBL/GenBank/DDBJ databases">
        <authorList>
            <person name="Mural R.J."/>
            <person name="Istrail S."/>
            <person name="Sutton G.G."/>
            <person name="Florea L."/>
            <person name="Halpern A.L."/>
            <person name="Mobarry C.M."/>
            <person name="Lippert R."/>
            <person name="Walenz B."/>
            <person name="Shatkay H."/>
            <person name="Dew I."/>
            <person name="Miller J.R."/>
            <person name="Flanigan M.J."/>
            <person name="Edwards N.J."/>
            <person name="Bolanos R."/>
            <person name="Fasulo D."/>
            <person name="Halldorsson B.V."/>
            <person name="Hannenhalli S."/>
            <person name="Turner R."/>
            <person name="Yooseph S."/>
            <person name="Lu F."/>
            <person name="Nusskern D.R."/>
            <person name="Shue B.C."/>
            <person name="Zheng X.H."/>
            <person name="Zhong F."/>
            <person name="Delcher A.L."/>
            <person name="Huson D.H."/>
            <person name="Kravitz S.A."/>
            <person name="Mouchard L."/>
            <person name="Reinert K."/>
            <person name="Remington K.A."/>
            <person name="Clark A.G."/>
            <person name="Waterman M.S."/>
            <person name="Eichler E.E."/>
            <person name="Adams M.D."/>
            <person name="Hunkapiller M.W."/>
            <person name="Myers E.W."/>
            <person name="Venter J.C."/>
        </authorList>
    </citation>
    <scope>NUCLEOTIDE SEQUENCE [LARGE SCALE GENOMIC DNA]</scope>
</reference>
<reference key="6">
    <citation type="journal article" date="2004" name="Genome Res.">
        <title>The status, quality, and expansion of the NIH full-length cDNA project: the Mammalian Gene Collection (MGC).</title>
        <authorList>
            <consortium name="The MGC Project Team"/>
        </authorList>
    </citation>
    <scope>NUCLEOTIDE SEQUENCE [LARGE SCALE MRNA] (ISOFORM 1)</scope>
    <source>
        <tissue>Muscle</tissue>
        <tissue>Urinary bladder</tissue>
        <tissue>Uterus</tissue>
    </source>
</reference>
<reference key="7">
    <citation type="journal article" date="2003" name="FEBS Lett.">
        <title>Human homologue of ariadne promotes the ubiquitylation of translation initiation factor 4E homologous protein, 4EHP.</title>
        <authorList>
            <person name="Tan N.G."/>
            <person name="Ardley H.C."/>
            <person name="Scott G.B."/>
            <person name="Rose S.A."/>
            <person name="Markham A.F."/>
            <person name="Robinson P.A."/>
        </authorList>
    </citation>
    <scope>UBIQUITINATION BY ARIH1</scope>
</reference>
<reference key="8">
    <citation type="journal article" date="2007" name="Genes Dev.">
        <title>ISG15 modification of the eIF4E cognate 4EHP enhances cap structure-binding activity of 4EHP.</title>
        <authorList>
            <person name="Okumura F."/>
            <person name="Zou W."/>
            <person name="Zhang D.E."/>
        </authorList>
    </citation>
    <scope>ISGYLATION AT LYS-134 AND LYS-222</scope>
</reference>
<reference key="9">
    <citation type="journal article" date="2009" name="Science">
        <title>Lysine acetylation targets protein complexes and co-regulates major cellular functions.</title>
        <authorList>
            <person name="Choudhary C."/>
            <person name="Kumar C."/>
            <person name="Gnad F."/>
            <person name="Nielsen M.L."/>
            <person name="Rehman M."/>
            <person name="Walther T.C."/>
            <person name="Olsen J.V."/>
            <person name="Mann M."/>
        </authorList>
    </citation>
    <scope>ACETYLATION [LARGE SCALE ANALYSIS] AT LYS-134</scope>
    <scope>IDENTIFICATION BY MASS SPECTROMETRY [LARGE SCALE ANALYSIS]</scope>
</reference>
<reference key="10">
    <citation type="journal article" date="2011" name="BMC Syst. Biol.">
        <title>Initial characterization of the human central proteome.</title>
        <authorList>
            <person name="Burkard T.R."/>
            <person name="Planyavsky M."/>
            <person name="Kaupe I."/>
            <person name="Breitwieser F.P."/>
            <person name="Buerckstuemmer T."/>
            <person name="Bennett K.L."/>
            <person name="Superti-Furga G."/>
            <person name="Colinge J."/>
        </authorList>
    </citation>
    <scope>IDENTIFICATION BY MASS SPECTROMETRY [LARGE SCALE ANALYSIS]</scope>
</reference>
<reference key="11">
    <citation type="journal article" date="2012" name="Mol. Cell. Biol.">
        <title>A novel 4EHP-GIGYF2 translational repressor complex is essential for mammalian development.</title>
        <authorList>
            <person name="Morita M."/>
            <person name="Ler L.W."/>
            <person name="Fabian M.R."/>
            <person name="Siddiqui N."/>
            <person name="Mullin M."/>
            <person name="Henderson V.C."/>
            <person name="Alain T."/>
            <person name="Fonseca B.D."/>
            <person name="Karashchuk G."/>
            <person name="Bennett C.F."/>
            <person name="Kabuta T."/>
            <person name="Higashi S."/>
            <person name="Larsson O."/>
            <person name="Topisirovic I."/>
            <person name="Smith R.J."/>
            <person name="Gingras A.C."/>
            <person name="Sonenberg N."/>
        </authorList>
    </citation>
    <scope>FUNCTION</scope>
    <scope>IDENTIFICATION IN THE 4EHP-GYF2 COMPLEX</scope>
</reference>
<reference key="12">
    <citation type="journal article" date="2012" name="Proc. Natl. Acad. Sci. U.S.A.">
        <title>N-terminal acetylome analyses and functional insights of the N-terminal acetyltransferase NatB.</title>
        <authorList>
            <person name="Van Damme P."/>
            <person name="Lasa M."/>
            <person name="Polevoda B."/>
            <person name="Gazquez C."/>
            <person name="Elosegui-Artola A."/>
            <person name="Kim D.S."/>
            <person name="De Juan-Pardo E."/>
            <person name="Demeyer K."/>
            <person name="Hole K."/>
            <person name="Larrea E."/>
            <person name="Timmerman E."/>
            <person name="Prieto J."/>
            <person name="Arnesen T."/>
            <person name="Sherman F."/>
            <person name="Gevaert K."/>
            <person name="Aldabe R."/>
        </authorList>
    </citation>
    <scope>IDENTIFICATION BY MASS SPECTROMETRY [LARGE SCALE ANALYSIS]</scope>
</reference>
<reference key="13">
    <citation type="journal article" date="2013" name="J. Proteome Res.">
        <title>Toward a comprehensive characterization of a human cancer cell phosphoproteome.</title>
        <authorList>
            <person name="Zhou H."/>
            <person name="Di Palma S."/>
            <person name="Preisinger C."/>
            <person name="Peng M."/>
            <person name="Polat A.N."/>
            <person name="Heck A.J."/>
            <person name="Mohammed S."/>
        </authorList>
    </citation>
    <scope>PHOSPHORYLATION [LARGE SCALE ANALYSIS] AT SER-13</scope>
    <scope>IDENTIFICATION BY MASS SPECTROMETRY [LARGE SCALE ANALYSIS]</scope>
    <source>
        <tissue>Cervix carcinoma</tissue>
        <tissue>Erythroleukemia</tissue>
    </source>
</reference>
<reference key="14">
    <citation type="journal article" date="2013" name="PLoS ONE">
        <title>Investigating the consequences of eIF4E2 (4EHP) interaction with 4E-transporter on its cellular distribution in HeLa cells.</title>
        <authorList>
            <person name="Kubacka D."/>
            <person name="Kamenska A."/>
            <person name="Broomhead H."/>
            <person name="Minshall N."/>
            <person name="Darzynkiewicz E."/>
            <person name="Standart N."/>
        </authorList>
    </citation>
    <scope>SUBCELLULAR LOCATION</scope>
    <scope>INTERACTION WITH EIF4ENIF1</scope>
</reference>
<reference key="15">
    <citation type="journal article" date="2015" name="Mol. Cell. Biol.">
        <title>The E3 ubiquitin ligase ARIH1 protects against genotoxic stress by initiating a 4EHP-mediated mRNA translation arrest.</title>
        <authorList>
            <person name="von Stechow L."/>
            <person name="Typas D."/>
            <person name="Carreras Puigvert J."/>
            <person name="Oort L."/>
            <person name="Siddappa R."/>
            <person name="Pines A."/>
            <person name="Vrieling H."/>
            <person name="van de Water B."/>
            <person name="Mullenders L.H."/>
            <person name="Danen E.H."/>
        </authorList>
    </citation>
    <scope>FUNCTION</scope>
    <scope>UBIQUITINATION</scope>
    <scope>MUTAGENESIS OF LYS-121; LYS-130; LYS-134 AND LYS-222</scope>
</reference>
<reference key="16">
    <citation type="journal article" date="2017" name="Proc. Natl. Acad. Sci. U.S.A.">
        <title>Cap-binding protein 4EHP effects translation silencing by microRNAs.</title>
        <authorList>
            <person name="Chapat C."/>
            <person name="Jafarnejad S.M."/>
            <person name="Matta-Camacho E."/>
            <person name="Hesketh G.G."/>
            <person name="Gelbart I.A."/>
            <person name="Attig J."/>
            <person name="Gkogkas C.G."/>
            <person name="Alain T."/>
            <person name="Stern-Ginossar N."/>
            <person name="Fabian M.R."/>
            <person name="Gingras A.C."/>
            <person name="Duchaine T.F."/>
            <person name="Sonenberg N."/>
        </authorList>
    </citation>
    <scope>FUNCTION</scope>
    <scope>INTERACTION WITH EIF4ENIF1</scope>
</reference>
<reference key="17">
    <citation type="journal article" date="2020" name="Mol. Cell">
        <title>GIGYF2 and 4EHP Inhibit Translation Initiation of Defective Messenger RNAs to Assist Ribosome-Associated Quality Control.</title>
        <authorList>
            <person name="Hickey K.L."/>
            <person name="Dickson K."/>
            <person name="Cogan J.Z."/>
            <person name="Replogle J.M."/>
            <person name="Schoof M."/>
            <person name="D'Orazio K.N."/>
            <person name="Sinha N.K."/>
            <person name="Hussmann J.A."/>
            <person name="Jost M."/>
            <person name="Frost A."/>
            <person name="Green R."/>
            <person name="Weissman J.S."/>
            <person name="Kostova K.K."/>
        </authorList>
    </citation>
    <scope>FUNCTION</scope>
    <scope>IDENTIFICATION IN THE 4EHP-GYF2 COMPLEX</scope>
</reference>
<reference key="18">
    <citation type="journal article" date="2021" name="Mol. Cell">
        <title>microRNA-induced translational control of antiviral immunity by the cap-binding protein 4EHP.</title>
        <authorList>
            <person name="Zhang X."/>
            <person name="Chapat C."/>
            <person name="Wang P."/>
            <person name="Choi J.H."/>
            <person name="Li Q."/>
            <person name="Luo J."/>
            <person name="Wiebe S."/>
            <person name="Kim S.H."/>
            <person name="Robichaud N."/>
            <person name="Karam I.F."/>
            <person name="Dai D."/>
            <person name="Hackett A.P."/>
            <person name="Lin R."/>
            <person name="Alain T."/>
            <person name="Yang L."/>
            <person name="Jafarnejad S.M."/>
            <person name="Sonenberg N."/>
        </authorList>
    </citation>
    <scope>FUNCTION</scope>
</reference>
<reference key="19">
    <citation type="journal article" date="2022" name="Proc. Natl. Acad. Sci. U.S.A.">
        <title>SARS-CoV-2 impairs interferon production via NSP2-induced repression of mRNA translation.</title>
        <authorList>
            <person name="Xu Z."/>
            <person name="Choi J.H."/>
            <person name="Dai D.L."/>
            <person name="Luo J."/>
            <person name="Ladak R.J."/>
            <person name="Li Q."/>
            <person name="Wang Y."/>
            <person name="Zhang C."/>
            <person name="Wiebe S."/>
            <person name="Liu A.C.H."/>
            <person name="Ran X."/>
            <person name="Yang J."/>
            <person name="Naeli P."/>
            <person name="Garzia A."/>
            <person name="Zhou L."/>
            <person name="Mahmood N."/>
            <person name="Deng Q."/>
            <person name="Elaish M."/>
            <person name="Lin R."/>
            <person name="Mahal L.K."/>
            <person name="Hobman T.C."/>
            <person name="Pelletier J."/>
            <person name="Alain T."/>
            <person name="Vidal S.M."/>
            <person name="Duchaine T."/>
            <person name="Mazhab-Jafari M.T."/>
            <person name="Mao X."/>
            <person name="Jafarnejad S.M."/>
            <person name="Sonenberg N."/>
        </authorList>
    </citation>
    <scope>FUNCTION</scope>
    <scope>FUNCTION (MICROBIAL INFECTION)</scope>
    <scope>INTERACTION WITH GIGYF2</scope>
</reference>
<reference evidence="21 22" key="20">
    <citation type="journal article" date="2007" name="J. Mol. Biol.">
        <title>Structures of the human eIF4E homologous protein, h4EHP, in its m7GTP-bound and unliganded forms.</title>
        <authorList>
            <person name="Rosettani P."/>
            <person name="Knapp S."/>
            <person name="Vismara M.-G."/>
            <person name="Rusconi L."/>
            <person name="Cameron A.D."/>
        </authorList>
    </citation>
    <scope>X-RAY CRYSTALLOGRAPHY (1.70 ANGSTROMS) OF 45-234 IN COMPLEXES WITH THE MRNA CAP ANALOG N7-METHYLGUANOSINE 5'-TRIPHOSPHATE AND EIF4EBP1</scope>
    <scope>INTERACTION WITH EIF4EBP1</scope>
    <scope>FUNCTION</scope>
</reference>
<accession>O60573</accession>
<accession>B8ZZJ9</accession>
<accession>O75349</accession>